<feature type="chain" id="PRO_0000195865" description="Probable glutamine--tRNA ligase">
    <location>
        <begin position="1"/>
        <end position="811"/>
    </location>
</feature>
<feature type="region of interest" description="Disordered" evidence="3">
    <location>
        <begin position="190"/>
        <end position="217"/>
    </location>
</feature>
<feature type="short sequence motif" description="'HIGH' region">
    <location>
        <begin position="269"/>
        <end position="279"/>
    </location>
</feature>
<feature type="short sequence motif" description="'KMSKS' region">
    <location>
        <begin position="502"/>
        <end position="506"/>
    </location>
</feature>
<feature type="compositionally biased region" description="Basic residues" evidence="3">
    <location>
        <begin position="194"/>
        <end position="205"/>
    </location>
</feature>
<feature type="compositionally biased region" description="Basic and acidic residues" evidence="3">
    <location>
        <begin position="207"/>
        <end position="217"/>
    </location>
</feature>
<feature type="binding site" evidence="1">
    <location>
        <begin position="270"/>
        <end position="272"/>
    </location>
    <ligand>
        <name>ATP</name>
        <dbReference type="ChEBI" id="CHEBI:30616"/>
    </ligand>
</feature>
<feature type="binding site" evidence="1">
    <location>
        <begin position="276"/>
        <end position="282"/>
    </location>
    <ligand>
        <name>ATP</name>
        <dbReference type="ChEBI" id="CHEBI:30616"/>
    </ligand>
</feature>
<feature type="binding site" evidence="1">
    <location>
        <position position="302"/>
    </location>
    <ligand>
        <name>L-glutamine</name>
        <dbReference type="ChEBI" id="CHEBI:58359"/>
    </ligand>
</feature>
<feature type="binding site" evidence="1">
    <location>
        <position position="447"/>
    </location>
    <ligand>
        <name>L-glutamine</name>
        <dbReference type="ChEBI" id="CHEBI:58359"/>
    </ligand>
</feature>
<feature type="binding site" evidence="1">
    <location>
        <position position="466"/>
    </location>
    <ligand>
        <name>ATP</name>
        <dbReference type="ChEBI" id="CHEBI:30616"/>
    </ligand>
</feature>
<feature type="binding site" evidence="1">
    <location>
        <begin position="495"/>
        <end position="496"/>
    </location>
    <ligand>
        <name>ATP</name>
        <dbReference type="ChEBI" id="CHEBI:30616"/>
    </ligand>
</feature>
<feature type="binding site" evidence="1">
    <location>
        <begin position="503"/>
        <end position="505"/>
    </location>
    <ligand>
        <name>ATP</name>
        <dbReference type="ChEBI" id="CHEBI:30616"/>
    </ligand>
</feature>
<reference key="1">
    <citation type="journal article" date="2002" name="Nature">
        <title>The genome sequence of Schizosaccharomyces pombe.</title>
        <authorList>
            <person name="Wood V."/>
            <person name="Gwilliam R."/>
            <person name="Rajandream M.A."/>
            <person name="Lyne M.H."/>
            <person name="Lyne R."/>
            <person name="Stewart A."/>
            <person name="Sgouros J.G."/>
            <person name="Peat N."/>
            <person name="Hayles J."/>
            <person name="Baker S.G."/>
            <person name="Basham D."/>
            <person name="Bowman S."/>
            <person name="Brooks K."/>
            <person name="Brown D."/>
            <person name="Brown S."/>
            <person name="Chillingworth T."/>
            <person name="Churcher C.M."/>
            <person name="Collins M."/>
            <person name="Connor R."/>
            <person name="Cronin A."/>
            <person name="Davis P."/>
            <person name="Feltwell T."/>
            <person name="Fraser A."/>
            <person name="Gentles S."/>
            <person name="Goble A."/>
            <person name="Hamlin N."/>
            <person name="Harris D.E."/>
            <person name="Hidalgo J."/>
            <person name="Hodgson G."/>
            <person name="Holroyd S."/>
            <person name="Hornsby T."/>
            <person name="Howarth S."/>
            <person name="Huckle E.J."/>
            <person name="Hunt S."/>
            <person name="Jagels K."/>
            <person name="James K.D."/>
            <person name="Jones L."/>
            <person name="Jones M."/>
            <person name="Leather S."/>
            <person name="McDonald S."/>
            <person name="McLean J."/>
            <person name="Mooney P."/>
            <person name="Moule S."/>
            <person name="Mungall K.L."/>
            <person name="Murphy L.D."/>
            <person name="Niblett D."/>
            <person name="Odell C."/>
            <person name="Oliver K."/>
            <person name="O'Neil S."/>
            <person name="Pearson D."/>
            <person name="Quail M.A."/>
            <person name="Rabbinowitsch E."/>
            <person name="Rutherford K.M."/>
            <person name="Rutter S."/>
            <person name="Saunders D."/>
            <person name="Seeger K."/>
            <person name="Sharp S."/>
            <person name="Skelton J."/>
            <person name="Simmonds M.N."/>
            <person name="Squares R."/>
            <person name="Squares S."/>
            <person name="Stevens K."/>
            <person name="Taylor K."/>
            <person name="Taylor R.G."/>
            <person name="Tivey A."/>
            <person name="Walsh S.V."/>
            <person name="Warren T."/>
            <person name="Whitehead S."/>
            <person name="Woodward J.R."/>
            <person name="Volckaert G."/>
            <person name="Aert R."/>
            <person name="Robben J."/>
            <person name="Grymonprez B."/>
            <person name="Weltjens I."/>
            <person name="Vanstreels E."/>
            <person name="Rieger M."/>
            <person name="Schaefer M."/>
            <person name="Mueller-Auer S."/>
            <person name="Gabel C."/>
            <person name="Fuchs M."/>
            <person name="Duesterhoeft A."/>
            <person name="Fritzc C."/>
            <person name="Holzer E."/>
            <person name="Moestl D."/>
            <person name="Hilbert H."/>
            <person name="Borzym K."/>
            <person name="Langer I."/>
            <person name="Beck A."/>
            <person name="Lehrach H."/>
            <person name="Reinhardt R."/>
            <person name="Pohl T.M."/>
            <person name="Eger P."/>
            <person name="Zimmermann W."/>
            <person name="Wedler H."/>
            <person name="Wambutt R."/>
            <person name="Purnelle B."/>
            <person name="Goffeau A."/>
            <person name="Cadieu E."/>
            <person name="Dreano S."/>
            <person name="Gloux S."/>
            <person name="Lelaure V."/>
            <person name="Mottier S."/>
            <person name="Galibert F."/>
            <person name="Aves S.J."/>
            <person name="Xiang Z."/>
            <person name="Hunt C."/>
            <person name="Moore K."/>
            <person name="Hurst S.M."/>
            <person name="Lucas M."/>
            <person name="Rochet M."/>
            <person name="Gaillardin C."/>
            <person name="Tallada V.A."/>
            <person name="Garzon A."/>
            <person name="Thode G."/>
            <person name="Daga R.R."/>
            <person name="Cruzado L."/>
            <person name="Jimenez J."/>
            <person name="Sanchez M."/>
            <person name="del Rey F."/>
            <person name="Benito J."/>
            <person name="Dominguez A."/>
            <person name="Revuelta J.L."/>
            <person name="Moreno S."/>
            <person name="Armstrong J."/>
            <person name="Forsburg S.L."/>
            <person name="Cerutti L."/>
            <person name="Lowe T."/>
            <person name="McCombie W.R."/>
            <person name="Paulsen I."/>
            <person name="Potashkin J."/>
            <person name="Shpakovski G.V."/>
            <person name="Ussery D."/>
            <person name="Barrell B.G."/>
            <person name="Nurse P."/>
        </authorList>
    </citation>
    <scope>NUCLEOTIDE SEQUENCE [LARGE SCALE GENOMIC DNA]</scope>
    <source>
        <strain>972 / ATCC 24843</strain>
    </source>
</reference>
<reference key="2">
    <citation type="journal article" date="2006" name="Nat. Biotechnol.">
        <title>ORFeome cloning and global analysis of protein localization in the fission yeast Schizosaccharomyces pombe.</title>
        <authorList>
            <person name="Matsuyama A."/>
            <person name="Arai R."/>
            <person name="Yashiroda Y."/>
            <person name="Shirai A."/>
            <person name="Kamata A."/>
            <person name="Sekido S."/>
            <person name="Kobayashi Y."/>
            <person name="Hashimoto A."/>
            <person name="Hamamoto M."/>
            <person name="Hiraoka Y."/>
            <person name="Horinouchi S."/>
            <person name="Yoshida M."/>
        </authorList>
    </citation>
    <scope>SUBCELLULAR LOCATION [LARGE SCALE ANALYSIS]</scope>
</reference>
<comment type="catalytic activity">
    <reaction evidence="2">
        <text>tRNA(Gln) + L-glutamine + ATP = L-glutaminyl-tRNA(Gln) + AMP + diphosphate</text>
        <dbReference type="Rhea" id="RHEA:20121"/>
        <dbReference type="Rhea" id="RHEA-COMP:9662"/>
        <dbReference type="Rhea" id="RHEA-COMP:9681"/>
        <dbReference type="ChEBI" id="CHEBI:30616"/>
        <dbReference type="ChEBI" id="CHEBI:33019"/>
        <dbReference type="ChEBI" id="CHEBI:58359"/>
        <dbReference type="ChEBI" id="CHEBI:78442"/>
        <dbReference type="ChEBI" id="CHEBI:78521"/>
        <dbReference type="ChEBI" id="CHEBI:456215"/>
        <dbReference type="EC" id="6.1.1.18"/>
    </reaction>
</comment>
<comment type="subcellular location">
    <subcellularLocation>
        <location evidence="4">Cytoplasm</location>
    </subcellularLocation>
</comment>
<comment type="similarity">
    <text evidence="5">Belongs to the class-I aminoacyl-tRNA synthetase family.</text>
</comment>
<accession>Q9Y7Y8</accession>
<protein>
    <recommendedName>
        <fullName>Probable glutamine--tRNA ligase</fullName>
        <ecNumber evidence="2">6.1.1.18</ecNumber>
    </recommendedName>
    <alternativeName>
        <fullName>Glutaminyl-tRNA synthetase</fullName>
        <shortName>GlnRS</shortName>
    </alternativeName>
</protein>
<gene>
    <name type="primary">qrs1</name>
    <name type="ORF">SPBC342.02</name>
</gene>
<proteinExistence type="inferred from homology"/>
<organism>
    <name type="scientific">Schizosaccharomyces pombe (strain 972 / ATCC 24843)</name>
    <name type="common">Fission yeast</name>
    <dbReference type="NCBI Taxonomy" id="284812"/>
    <lineage>
        <taxon>Eukaryota</taxon>
        <taxon>Fungi</taxon>
        <taxon>Dikarya</taxon>
        <taxon>Ascomycota</taxon>
        <taxon>Taphrinomycotina</taxon>
        <taxon>Schizosaccharomycetes</taxon>
        <taxon>Schizosaccharomycetales</taxon>
        <taxon>Schizosaccharomycetaceae</taxon>
        <taxon>Schizosaccharomyces</taxon>
    </lineage>
</organism>
<dbReference type="EC" id="6.1.1.18" evidence="2"/>
<dbReference type="EMBL" id="CU329671">
    <property type="protein sequence ID" value="CAB46772.1"/>
    <property type="molecule type" value="Genomic_DNA"/>
</dbReference>
<dbReference type="PIR" id="T40275">
    <property type="entry name" value="T40275"/>
</dbReference>
<dbReference type="RefSeq" id="NP_596745.1">
    <property type="nucleotide sequence ID" value="NM_001023765.2"/>
</dbReference>
<dbReference type="SMR" id="Q9Y7Y8"/>
<dbReference type="BioGRID" id="277494">
    <property type="interactions" value="4"/>
</dbReference>
<dbReference type="FunCoup" id="Q9Y7Y8">
    <property type="interactions" value="1051"/>
</dbReference>
<dbReference type="STRING" id="284812.Q9Y7Y8"/>
<dbReference type="iPTMnet" id="Q9Y7Y8"/>
<dbReference type="PaxDb" id="4896-SPBC342.02.1"/>
<dbReference type="EnsemblFungi" id="SPBC342.02.1">
    <property type="protein sequence ID" value="SPBC342.02.1:pep"/>
    <property type="gene ID" value="SPBC342.02"/>
</dbReference>
<dbReference type="GeneID" id="2540978"/>
<dbReference type="KEGG" id="spo:2540978"/>
<dbReference type="PomBase" id="SPBC342.02">
    <property type="gene designation" value="qrs1"/>
</dbReference>
<dbReference type="VEuPathDB" id="FungiDB:SPBC342.02"/>
<dbReference type="eggNOG" id="KOG1148">
    <property type="taxonomic scope" value="Eukaryota"/>
</dbReference>
<dbReference type="HOGENOM" id="CLU_001882_2_3_1"/>
<dbReference type="InParanoid" id="Q9Y7Y8"/>
<dbReference type="OMA" id="TWCIYPM"/>
<dbReference type="PhylomeDB" id="Q9Y7Y8"/>
<dbReference type="PRO" id="PR:Q9Y7Y8"/>
<dbReference type="Proteomes" id="UP000002485">
    <property type="component" value="Chromosome II"/>
</dbReference>
<dbReference type="GO" id="GO:0005829">
    <property type="term" value="C:cytosol"/>
    <property type="evidence" value="ECO:0007005"/>
    <property type="project" value="PomBase"/>
</dbReference>
<dbReference type="GO" id="GO:0005524">
    <property type="term" value="F:ATP binding"/>
    <property type="evidence" value="ECO:0007669"/>
    <property type="project" value="UniProtKB-KW"/>
</dbReference>
<dbReference type="GO" id="GO:0004819">
    <property type="term" value="F:glutamine-tRNA ligase activity"/>
    <property type="evidence" value="ECO:0000318"/>
    <property type="project" value="GO_Central"/>
</dbReference>
<dbReference type="GO" id="GO:0002181">
    <property type="term" value="P:cytoplasmic translation"/>
    <property type="evidence" value="ECO:0000303"/>
    <property type="project" value="PomBase"/>
</dbReference>
<dbReference type="GO" id="GO:0006425">
    <property type="term" value="P:glutaminyl-tRNA aminoacylation"/>
    <property type="evidence" value="ECO:0000318"/>
    <property type="project" value="GO_Central"/>
</dbReference>
<dbReference type="CDD" id="cd00807">
    <property type="entry name" value="GlnRS_core"/>
    <property type="match status" value="1"/>
</dbReference>
<dbReference type="FunFam" id="1.10.1160.10:FF:000001">
    <property type="entry name" value="Glutamine--tRNA ligase"/>
    <property type="match status" value="1"/>
</dbReference>
<dbReference type="FunFam" id="2.40.240.10:FF:000007">
    <property type="entry name" value="Glutamine--tRNA ligase"/>
    <property type="match status" value="1"/>
</dbReference>
<dbReference type="FunFam" id="3.90.800.10:FF:000001">
    <property type="entry name" value="Glutamine--tRNA ligase"/>
    <property type="match status" value="1"/>
</dbReference>
<dbReference type="FunFam" id="1.10.10.2420:FF:000001">
    <property type="entry name" value="Glutamine--tRNA ligase cytoplasmic"/>
    <property type="match status" value="1"/>
</dbReference>
<dbReference type="FunFam" id="1.10.8.1290:FF:000002">
    <property type="entry name" value="Glutamine--tRNA ligase cytoplasmic"/>
    <property type="match status" value="1"/>
</dbReference>
<dbReference type="FunFam" id="2.40.240.10:FF:000015">
    <property type="entry name" value="Glutaminyl-tRNA synthetase"/>
    <property type="match status" value="1"/>
</dbReference>
<dbReference type="FunFam" id="3.40.50.620:FF:000183">
    <property type="entry name" value="Glutaminyl-tRNA synthetase"/>
    <property type="match status" value="1"/>
</dbReference>
<dbReference type="Gene3D" id="1.10.10.2420">
    <property type="match status" value="1"/>
</dbReference>
<dbReference type="Gene3D" id="1.10.8.1290">
    <property type="entry name" value="Glutaminyl-tRNA synthetase, non-specific RNA binding region part 1, domain 1"/>
    <property type="match status" value="1"/>
</dbReference>
<dbReference type="Gene3D" id="3.40.50.620">
    <property type="entry name" value="HUPs"/>
    <property type="match status" value="1"/>
</dbReference>
<dbReference type="Gene3D" id="2.40.240.10">
    <property type="entry name" value="Ribosomal Protein L25, Chain P"/>
    <property type="match status" value="2"/>
</dbReference>
<dbReference type="InterPro" id="IPR001412">
    <property type="entry name" value="aa-tRNA-synth_I_CS"/>
</dbReference>
<dbReference type="InterPro" id="IPR004514">
    <property type="entry name" value="Gln-tRNA-synth"/>
</dbReference>
<dbReference type="InterPro" id="IPR007638">
    <property type="entry name" value="Gln-tRNA-synth_Ib_RNA-bd_2"/>
</dbReference>
<dbReference type="InterPro" id="IPR007639">
    <property type="entry name" value="Gln-tRNA-synth_Ib_RNA-bd_N"/>
</dbReference>
<dbReference type="InterPro" id="IPR042558">
    <property type="entry name" value="Gln-tRNA-synth_Ib_RNA-bd_N_1"/>
</dbReference>
<dbReference type="InterPro" id="IPR042559">
    <property type="entry name" value="Gln-tRNA-synth_Ib_RNA-bd_N_2"/>
</dbReference>
<dbReference type="InterPro" id="IPR050132">
    <property type="entry name" value="Gln/Glu-tRNA_Ligase"/>
</dbReference>
<dbReference type="InterPro" id="IPR000924">
    <property type="entry name" value="Glu/Gln-tRNA-synth"/>
</dbReference>
<dbReference type="InterPro" id="IPR020058">
    <property type="entry name" value="Glu/Gln-tRNA-synth_Ib_cat-dom"/>
</dbReference>
<dbReference type="InterPro" id="IPR020059">
    <property type="entry name" value="Glu/Gln-tRNA-synth_Ib_codon-bd"/>
</dbReference>
<dbReference type="InterPro" id="IPR020056">
    <property type="entry name" value="Rbsml_bL25/Gln-tRNA_synth_N"/>
</dbReference>
<dbReference type="InterPro" id="IPR011035">
    <property type="entry name" value="Ribosomal_bL25/Gln-tRNA_synth"/>
</dbReference>
<dbReference type="InterPro" id="IPR014729">
    <property type="entry name" value="Rossmann-like_a/b/a_fold"/>
</dbReference>
<dbReference type="InterPro" id="IPR049437">
    <property type="entry name" value="tRNA-synt_1c_C2"/>
</dbReference>
<dbReference type="NCBIfam" id="TIGR00440">
    <property type="entry name" value="glnS"/>
    <property type="match status" value="1"/>
</dbReference>
<dbReference type="PANTHER" id="PTHR43097:SF4">
    <property type="entry name" value="GLUTAMINE--TRNA LIGASE"/>
    <property type="match status" value="1"/>
</dbReference>
<dbReference type="PANTHER" id="PTHR43097">
    <property type="entry name" value="GLUTAMINE-TRNA LIGASE"/>
    <property type="match status" value="1"/>
</dbReference>
<dbReference type="Pfam" id="PF00749">
    <property type="entry name" value="tRNA-synt_1c"/>
    <property type="match status" value="1"/>
</dbReference>
<dbReference type="Pfam" id="PF03950">
    <property type="entry name" value="tRNA-synt_1c_C"/>
    <property type="match status" value="1"/>
</dbReference>
<dbReference type="Pfam" id="PF20974">
    <property type="entry name" value="tRNA-synt_1c_C2"/>
    <property type="match status" value="1"/>
</dbReference>
<dbReference type="Pfam" id="PF04558">
    <property type="entry name" value="tRNA_synt_1c_R1"/>
    <property type="match status" value="1"/>
</dbReference>
<dbReference type="Pfam" id="PF04557">
    <property type="entry name" value="tRNA_synt_1c_R2"/>
    <property type="match status" value="1"/>
</dbReference>
<dbReference type="PRINTS" id="PR00987">
    <property type="entry name" value="TRNASYNTHGLU"/>
</dbReference>
<dbReference type="SUPFAM" id="SSF52374">
    <property type="entry name" value="Nucleotidylyl transferase"/>
    <property type="match status" value="1"/>
</dbReference>
<dbReference type="SUPFAM" id="SSF50715">
    <property type="entry name" value="Ribosomal protein L25-like"/>
    <property type="match status" value="1"/>
</dbReference>
<dbReference type="PROSITE" id="PS00178">
    <property type="entry name" value="AA_TRNA_LIGASE_I"/>
    <property type="match status" value="1"/>
</dbReference>
<sequence length="811" mass="92073">MDQDYEELRAKFTKIGLNETTVKDTLKNKKLSSSLNKVIEETNVGSSGCDRTIGNLLFTLANASLKQKDPKSNAHEAFIASKIVSGDLKTNLQVNAAITYCKDKDTIDESEFDKETGVGVVLTPEQIEQLVGDYVAENKSKILEQRYQLLNPSASALRQHALLKWAPQLEVKQTLDRKFLELLGPKTEQDAAAGKKKGAKAKNSKQKTVDSGKAKEQKIVSEQSKKYNMFEEGFLAKLHKPGGNTQLIPERMKEHLQATGGGVVTRFPPEPNGYLHIGHSKAIAVNFGFARYHNGVCYLRFDDTNPEAEEERYFESIKDLVAWLGFQPYKITYSSDYFDKLYELAEELIKRDKAYVCHCTDAEIKKARGGEERGPRYACVHRDRPIEESLLEFRNMRDGKYQPKEAILRMKQDLSDGNPQMWDLIAYRVLNSPHPRTGDKWKIYPTYDFTHCLVDSFENISHSLCTTEFILSRVSYEWLCNALEVYCPAQREYGRLNVVGTLMSKRKIMKLVKEGYVHGWNDPRLYTLVALRRRGVPPGAILEFVSEVGVTTAVSNIEVARFENCVRKFLENSVPRLMFLPDPIKVTLENLDDSYREQIEIPFNPKDPSMGSRSAFLTKHIYIDRSDFREEASSDFFRLTLGQPVGLFRASHPVVAKRVVKNDEGEPIEIIAEYDASSSKKPKTFIQWVSRDKESNSPVLIAETRLFNNLFKCDNPAALKEQELAAQLNPESEVVLKNSIIEPGIYDLIKSAPWPKTDSSAGVDKAENPESVRFQAMRVGYFCLDEDTKKPNHLVLNRIVSLREDSAKNKN</sequence>
<keyword id="KW-0030">Aminoacyl-tRNA synthetase</keyword>
<keyword id="KW-0067">ATP-binding</keyword>
<keyword id="KW-0963">Cytoplasm</keyword>
<keyword id="KW-0436">Ligase</keyword>
<keyword id="KW-0547">Nucleotide-binding</keyword>
<keyword id="KW-0648">Protein biosynthesis</keyword>
<keyword id="KW-1185">Reference proteome</keyword>
<evidence type="ECO:0000250" key="1">
    <source>
        <dbReference type="UniProtKB" id="P00962"/>
    </source>
</evidence>
<evidence type="ECO:0000250" key="2">
    <source>
        <dbReference type="UniProtKB" id="P47897"/>
    </source>
</evidence>
<evidence type="ECO:0000256" key="3">
    <source>
        <dbReference type="SAM" id="MobiDB-lite"/>
    </source>
</evidence>
<evidence type="ECO:0000269" key="4">
    <source>
    </source>
</evidence>
<evidence type="ECO:0000305" key="5"/>
<name>SYQ_SCHPO</name>